<feature type="chain" id="PRO_0000277094" description="Large ribosomal subunit protein uL2cz/uL2cy">
    <location>
        <begin position="1"/>
        <end position="274"/>
    </location>
</feature>
<feature type="region of interest" description="Disordered" evidence="3">
    <location>
        <begin position="224"/>
        <end position="274"/>
    </location>
</feature>
<protein>
    <recommendedName>
        <fullName evidence="2">Large ribosomal subunit protein uL2cz/uL2cy</fullName>
    </recommendedName>
    <alternativeName>
        <fullName evidence="4">50S ribosomal protein L2, chloroplastic</fullName>
    </alternativeName>
</protein>
<organism>
    <name type="scientific">Morus indica</name>
    <name type="common">Mulberry</name>
    <dbReference type="NCBI Taxonomy" id="248361"/>
    <lineage>
        <taxon>Eukaryota</taxon>
        <taxon>Viridiplantae</taxon>
        <taxon>Streptophyta</taxon>
        <taxon>Embryophyta</taxon>
        <taxon>Tracheophyta</taxon>
        <taxon>Spermatophyta</taxon>
        <taxon>Magnoliopsida</taxon>
        <taxon>eudicotyledons</taxon>
        <taxon>Gunneridae</taxon>
        <taxon>Pentapetalae</taxon>
        <taxon>rosids</taxon>
        <taxon>fabids</taxon>
        <taxon>Rosales</taxon>
        <taxon>Moraceae</taxon>
        <taxon>Moreae</taxon>
        <taxon>Morus</taxon>
    </lineage>
</organism>
<sequence>MAIHLYKTSTPSTRKGAVDRQVKSNPRNNLIYGQHRCGKGRNARGIITAGHRGGGHKRLYRKIDFRRNEKDIYGKIVTIEYDPNRNAYICLIHYGGGEKRYILHPRGALIGDTIVSGTEVPIKMGNALPLTDMPLGTAIHNIEITLGKGGQLARAAGAVAKLIAKEGKSATLKLPSGEVRLIPKNCSATVGQVGNVGVNQKSLGRAGSKCWLGKRPVVRGVVMNPVDHPHGGGEGRAPIGRKKPATPWGYPALGRRSRKRNKYSDNLILRRRSK</sequence>
<geneLocation type="chloroplast"/>
<proteinExistence type="inferred from homology"/>
<gene>
    <name type="primary">rpl2-A</name>
    <name type="ordered locus">MoinCp062</name>
</gene>
<gene>
    <name type="primary">rpl2-B</name>
    <name type="ordered locus">MoinCp084</name>
</gene>
<dbReference type="EMBL" id="DQ226511">
    <property type="protein sequence ID" value="ABB20998.1"/>
    <property type="molecule type" value="Genomic_DNA"/>
</dbReference>
<dbReference type="EMBL" id="DQ226511">
    <property type="protein sequence ID" value="ABB21019.1"/>
    <property type="molecule type" value="Genomic_DNA"/>
</dbReference>
<dbReference type="SMR" id="Q09WV5"/>
<dbReference type="GO" id="GO:0009507">
    <property type="term" value="C:chloroplast"/>
    <property type="evidence" value="ECO:0007669"/>
    <property type="project" value="UniProtKB-SubCell"/>
</dbReference>
<dbReference type="GO" id="GO:0005762">
    <property type="term" value="C:mitochondrial large ribosomal subunit"/>
    <property type="evidence" value="ECO:0007669"/>
    <property type="project" value="TreeGrafter"/>
</dbReference>
<dbReference type="GO" id="GO:0019843">
    <property type="term" value="F:rRNA binding"/>
    <property type="evidence" value="ECO:0007669"/>
    <property type="project" value="UniProtKB-UniRule"/>
</dbReference>
<dbReference type="GO" id="GO:0003735">
    <property type="term" value="F:structural constituent of ribosome"/>
    <property type="evidence" value="ECO:0007669"/>
    <property type="project" value="InterPro"/>
</dbReference>
<dbReference type="GO" id="GO:0016740">
    <property type="term" value="F:transferase activity"/>
    <property type="evidence" value="ECO:0007669"/>
    <property type="project" value="InterPro"/>
</dbReference>
<dbReference type="GO" id="GO:0032543">
    <property type="term" value="P:mitochondrial translation"/>
    <property type="evidence" value="ECO:0007669"/>
    <property type="project" value="TreeGrafter"/>
</dbReference>
<dbReference type="FunFam" id="4.10.950.10:FF:000001">
    <property type="entry name" value="50S ribosomal protein L2"/>
    <property type="match status" value="1"/>
</dbReference>
<dbReference type="FunFam" id="2.30.30.30:FF:000008">
    <property type="entry name" value="50S ribosomal protein L2, chloroplastic"/>
    <property type="match status" value="1"/>
</dbReference>
<dbReference type="FunFam" id="2.40.50.140:FF:000029">
    <property type="entry name" value="50S ribosomal protein L2, chloroplastic"/>
    <property type="match status" value="1"/>
</dbReference>
<dbReference type="Gene3D" id="2.30.30.30">
    <property type="match status" value="1"/>
</dbReference>
<dbReference type="Gene3D" id="2.40.50.140">
    <property type="entry name" value="Nucleic acid-binding proteins"/>
    <property type="match status" value="1"/>
</dbReference>
<dbReference type="Gene3D" id="4.10.950.10">
    <property type="entry name" value="Ribosomal protein L2, domain 3"/>
    <property type="match status" value="1"/>
</dbReference>
<dbReference type="HAMAP" id="MF_01320_B">
    <property type="entry name" value="Ribosomal_uL2_B"/>
    <property type="match status" value="1"/>
</dbReference>
<dbReference type="InterPro" id="IPR012340">
    <property type="entry name" value="NA-bd_OB-fold"/>
</dbReference>
<dbReference type="InterPro" id="IPR014722">
    <property type="entry name" value="Rib_uL2_dom2"/>
</dbReference>
<dbReference type="InterPro" id="IPR002171">
    <property type="entry name" value="Ribosomal_uL2"/>
</dbReference>
<dbReference type="InterPro" id="IPR005880">
    <property type="entry name" value="Ribosomal_uL2_bac/org-type"/>
</dbReference>
<dbReference type="InterPro" id="IPR022669">
    <property type="entry name" value="Ribosomal_uL2_C"/>
</dbReference>
<dbReference type="InterPro" id="IPR022671">
    <property type="entry name" value="Ribosomal_uL2_CS"/>
</dbReference>
<dbReference type="InterPro" id="IPR014726">
    <property type="entry name" value="Ribosomal_uL2_dom3"/>
</dbReference>
<dbReference type="InterPro" id="IPR022666">
    <property type="entry name" value="Ribosomal_uL2_RNA-bd_dom"/>
</dbReference>
<dbReference type="InterPro" id="IPR008991">
    <property type="entry name" value="Translation_prot_SH3-like_sf"/>
</dbReference>
<dbReference type="NCBIfam" id="TIGR01171">
    <property type="entry name" value="rplB_bact"/>
    <property type="match status" value="1"/>
</dbReference>
<dbReference type="PANTHER" id="PTHR13691:SF5">
    <property type="entry name" value="LARGE RIBOSOMAL SUBUNIT PROTEIN UL2M"/>
    <property type="match status" value="1"/>
</dbReference>
<dbReference type="PANTHER" id="PTHR13691">
    <property type="entry name" value="RIBOSOMAL PROTEIN L2"/>
    <property type="match status" value="1"/>
</dbReference>
<dbReference type="Pfam" id="PF00181">
    <property type="entry name" value="Ribosomal_L2"/>
    <property type="match status" value="1"/>
</dbReference>
<dbReference type="Pfam" id="PF03947">
    <property type="entry name" value="Ribosomal_L2_C"/>
    <property type="match status" value="1"/>
</dbReference>
<dbReference type="PIRSF" id="PIRSF002158">
    <property type="entry name" value="Ribosomal_L2"/>
    <property type="match status" value="1"/>
</dbReference>
<dbReference type="SMART" id="SM01383">
    <property type="entry name" value="Ribosomal_L2"/>
    <property type="match status" value="1"/>
</dbReference>
<dbReference type="SMART" id="SM01382">
    <property type="entry name" value="Ribosomal_L2_C"/>
    <property type="match status" value="1"/>
</dbReference>
<dbReference type="SUPFAM" id="SSF50249">
    <property type="entry name" value="Nucleic acid-binding proteins"/>
    <property type="match status" value="1"/>
</dbReference>
<dbReference type="SUPFAM" id="SSF50104">
    <property type="entry name" value="Translation proteins SH3-like domain"/>
    <property type="match status" value="1"/>
</dbReference>
<dbReference type="PROSITE" id="PS00467">
    <property type="entry name" value="RIBOSOMAL_L2"/>
    <property type="match status" value="1"/>
</dbReference>
<keyword id="KW-0150">Chloroplast</keyword>
<keyword id="KW-0934">Plastid</keyword>
<keyword id="KW-0687">Ribonucleoprotein</keyword>
<keyword id="KW-0689">Ribosomal protein</keyword>
<reference key="1">
    <citation type="submission" date="2005-09" db="EMBL/GenBank/DDBJ databases">
        <title>The chloroplast genome of mulberry: structural features and comparative analysis.</title>
        <authorList>
            <person name="Ravi V."/>
            <person name="Khurana J.P."/>
            <person name="Tyagi A.K."/>
            <person name="Khurana P."/>
        </authorList>
    </citation>
    <scope>NUCLEOTIDE SEQUENCE [LARGE SCALE GENOMIC DNA]</scope>
    <source>
        <strain>cv. K2</strain>
    </source>
</reference>
<name>RK2_MORIN</name>
<accession>Q09WV5</accession>
<evidence type="ECO:0000250" key="1"/>
<evidence type="ECO:0000255" key="2">
    <source>
        <dbReference type="HAMAP-Rule" id="MF_01320"/>
    </source>
</evidence>
<evidence type="ECO:0000256" key="3">
    <source>
        <dbReference type="SAM" id="MobiDB-lite"/>
    </source>
</evidence>
<evidence type="ECO:0000305" key="4"/>
<comment type="subunit">
    <text evidence="1">Part of the 50S ribosomal subunit.</text>
</comment>
<comment type="subcellular location">
    <subcellularLocation>
        <location>Plastid</location>
        <location>Chloroplast</location>
    </subcellularLocation>
</comment>
<comment type="similarity">
    <text evidence="4">Belongs to the universal ribosomal protein uL2 family.</text>
</comment>